<protein>
    <recommendedName>
        <fullName evidence="8">Oxidoreductase asL5</fullName>
        <ecNumber evidence="10">1.1.1.-</ecNumber>
    </recommendedName>
    <alternativeName>
        <fullName evidence="8">Xenovulene A biosynthesis cluster protein L5</fullName>
    </alternativeName>
</protein>
<accession>A0A2U8U2K8</accession>
<sequence length="249" mass="25470">MSAIQRLTGKTAVITGGATGIGFAAAKRFIEEGAFVFIFGRRQEKLDAATAALGPNSRAVQGSVTELADLDRLYEAVKAERGSLDIVMANAGAGMATPLGKITGEQCDIVFGTNLKGTIFTIQGALPLMAQAGGGSIILTGSSSGTTGAPPLSVYGASKAAIRNLARSWAGTLRDEGIRINVLSPASIATEIAKEALGEQGMKMFAQQNPLKRMGQPEEVGAVAAFLASSDSSFMTASEVSVDGGLAQI</sequence>
<evidence type="ECO:0000250" key="1">
    <source>
        <dbReference type="UniProtKB" id="L0E2Z4"/>
    </source>
</evidence>
<evidence type="ECO:0000250" key="2">
    <source>
        <dbReference type="UniProtKB" id="O93868"/>
    </source>
</evidence>
<evidence type="ECO:0000255" key="3">
    <source>
        <dbReference type="PROSITE-ProRule" id="PRU10001"/>
    </source>
</evidence>
<evidence type="ECO:0000269" key="4">
    <source>
    </source>
</evidence>
<evidence type="ECO:0000269" key="5">
    <source>
    </source>
</evidence>
<evidence type="ECO:0000269" key="6">
    <source>
    </source>
</evidence>
<evidence type="ECO:0000269" key="7">
    <source>
    </source>
</evidence>
<evidence type="ECO:0000303" key="8">
    <source>
    </source>
</evidence>
<evidence type="ECO:0000305" key="9"/>
<evidence type="ECO:0000305" key="10">
    <source>
    </source>
</evidence>
<proteinExistence type="evidence at protein level"/>
<feature type="chain" id="PRO_0000449185" description="Oxidoreductase asL5">
    <location>
        <begin position="1"/>
        <end position="249"/>
    </location>
</feature>
<feature type="active site" description="Proton acceptor" evidence="3">
    <location>
        <position position="155"/>
    </location>
</feature>
<feature type="active site" description="Lowers pKa of active site Tyr" evidence="2">
    <location>
        <position position="159"/>
    </location>
</feature>
<feature type="binding site" evidence="1">
    <location>
        <position position="21"/>
    </location>
    <ligand>
        <name>NADP(+)</name>
        <dbReference type="ChEBI" id="CHEBI:58349"/>
    </ligand>
</feature>
<feature type="binding site" evidence="1">
    <location>
        <position position="45"/>
    </location>
    <ligand>
        <name>NADP(+)</name>
        <dbReference type="ChEBI" id="CHEBI:58349"/>
    </ligand>
</feature>
<feature type="binding site" evidence="2">
    <location>
        <position position="90"/>
    </location>
    <ligand>
        <name>NADP(+)</name>
        <dbReference type="ChEBI" id="CHEBI:58349"/>
    </ligand>
</feature>
<feature type="binding site" evidence="2">
    <location>
        <position position="155"/>
    </location>
    <ligand>
        <name>NADP(+)</name>
        <dbReference type="ChEBI" id="CHEBI:58349"/>
    </ligand>
</feature>
<feature type="binding site" evidence="2">
    <location>
        <position position="159"/>
    </location>
    <ligand>
        <name>NADP(+)</name>
        <dbReference type="ChEBI" id="CHEBI:58349"/>
    </ligand>
</feature>
<feature type="binding site" evidence="2">
    <location>
        <position position="188"/>
    </location>
    <ligand>
        <name>NADP(+)</name>
        <dbReference type="ChEBI" id="CHEBI:58349"/>
    </ligand>
</feature>
<feature type="binding site" evidence="1">
    <location>
        <position position="190"/>
    </location>
    <ligand>
        <name>NADP(+)</name>
        <dbReference type="ChEBI" id="CHEBI:58349"/>
    </ligand>
</feature>
<keyword id="KW-0521">NADP</keyword>
<keyword id="KW-0560">Oxidoreductase</keyword>
<name>ASL5_SARSH</name>
<comment type="function">
    <text evidence="4 5 6">Oxidoreductase; part of the gene cluster that mediates the biosynthesis of xenovulene A, an unusual meroterpenoid that has potent inhibitory effects on the human gamma-aminobutyrate A (GABAA) benzodiazepine receptor (PubMed:29773797). The first step of xenovulene A biosynthesis is the biosynthesis of 3-methylorcinaldehyde performed by the non-reducing polyketide synthase aspks1 (PubMed:17912413, PubMed:20552126, PubMed:29773797). The salicylate hydroxylase asL1 then catalyzes the oxidative dearomatization of 3-methylorcinaldehyde to yield a dearomatized hydroxycyclohexadione (PubMed:29773797). The 2-oxoglutarate-dependent dioxygenase asL3 further catalyzes the oxidative ring expansion to provide the first tropolone metabolite (PubMed:29773797). The cytochrome P450 monooxygenase asR2 allows the synthesis of tropolone hemiacetal (PubMed:29773797). In parallel, a previously unrecognised class of terpene cyclase, asR6, produces alpha-humulene from farnesylpyrophosphate (FPP) (PubMed:29773797). The putative Diels-Alderase asR5 probably catalyzes the formation of the tropolone-humulene skeleton by linking humulene and the polyketide moiety (PubMed:29773797). Oxidative-ring contractions catalyzed by asL4 and asL6 then processively remove carbon atoms from the polyketide to yield xenovulene A (PubMed:29773797).</text>
</comment>
<comment type="induction">
    <text evidence="6">Expression is significantly up-regulated under xenovulene A producing condition.</text>
</comment>
<comment type="disruption phenotype">
    <text evidence="6">Does not affect the production of xenovulene A.</text>
</comment>
<comment type="biotechnology">
    <text evidence="7">Xenovulene A is a natural product exhibiting little structural resemblance with classical benzodiazepines yet is able to displace high-affinity ligand binding to the benzodiazepine site of the gamma-aminobutyrate A (GABAA) receptor and could be potentially used as an anti-depressant with reduced addictive properties.</text>
</comment>
<comment type="similarity">
    <text evidence="9">Belongs to the short-chain dehydrogenases/reductases (SDR) family.</text>
</comment>
<dbReference type="EC" id="1.1.1.-" evidence="10"/>
<dbReference type="EMBL" id="MG736817">
    <property type="protein sequence ID" value="AWM95785.1"/>
    <property type="molecule type" value="Genomic_DNA"/>
</dbReference>
<dbReference type="SMR" id="A0A2U8U2K8"/>
<dbReference type="GO" id="GO:0016491">
    <property type="term" value="F:oxidoreductase activity"/>
    <property type="evidence" value="ECO:0007669"/>
    <property type="project" value="UniProtKB-KW"/>
</dbReference>
<dbReference type="CDD" id="cd05233">
    <property type="entry name" value="SDR_c"/>
    <property type="match status" value="1"/>
</dbReference>
<dbReference type="FunFam" id="3.40.50.720:FF:000084">
    <property type="entry name" value="Short-chain dehydrogenase reductase"/>
    <property type="match status" value="1"/>
</dbReference>
<dbReference type="Gene3D" id="3.40.50.720">
    <property type="entry name" value="NAD(P)-binding Rossmann-like Domain"/>
    <property type="match status" value="1"/>
</dbReference>
<dbReference type="InterPro" id="IPR036291">
    <property type="entry name" value="NAD(P)-bd_dom_sf"/>
</dbReference>
<dbReference type="InterPro" id="IPR020904">
    <property type="entry name" value="Sc_DH/Rdtase_CS"/>
</dbReference>
<dbReference type="InterPro" id="IPR002347">
    <property type="entry name" value="SDR_fam"/>
</dbReference>
<dbReference type="PANTHER" id="PTHR43669">
    <property type="entry name" value="5-KETO-D-GLUCONATE 5-REDUCTASE"/>
    <property type="match status" value="1"/>
</dbReference>
<dbReference type="PANTHER" id="PTHR43669:SF3">
    <property type="entry name" value="ALCOHOL DEHYDROGENASE, PUTATIVE (AFU_ORTHOLOGUE AFUA_3G03445)-RELATED"/>
    <property type="match status" value="1"/>
</dbReference>
<dbReference type="Pfam" id="PF13561">
    <property type="entry name" value="adh_short_C2"/>
    <property type="match status" value="1"/>
</dbReference>
<dbReference type="PRINTS" id="PR00081">
    <property type="entry name" value="GDHRDH"/>
</dbReference>
<dbReference type="SUPFAM" id="SSF51735">
    <property type="entry name" value="NAD(P)-binding Rossmann-fold domains"/>
    <property type="match status" value="1"/>
</dbReference>
<dbReference type="PROSITE" id="PS00061">
    <property type="entry name" value="ADH_SHORT"/>
    <property type="match status" value="1"/>
</dbReference>
<reference key="1">
    <citation type="journal article" date="2018" name="Nat. Commun.">
        <title>Three previously unrecognised classes of biosynthetic enzymes revealed during the production of xenovulene A.</title>
        <authorList>
            <person name="Schor R."/>
            <person name="Schotte C."/>
            <person name="Wibberg D."/>
            <person name="Kalinowski J."/>
            <person name="Cox R.J."/>
        </authorList>
    </citation>
    <scope>NUCLEOTIDE SEQUENCE [GENOMIC DNA]</scope>
    <scope>INDUCTION</scope>
    <scope>FUNCTION</scope>
    <scope>DISRUPTION PHENOTYPE</scope>
</reference>
<reference key="2">
    <citation type="journal article" date="1997" name="J. Pharmacol. Exp. Ther.">
        <title>Regulation of neuronal and recombinant GABA(A) receptor ion channels by xenovulene A, a natural product isolated from Acremonium strictum.</title>
        <authorList>
            <person name="Thomas P."/>
            <person name="Sundaram H."/>
            <person name="Krishek B.J."/>
            <person name="Chazot P."/>
            <person name="Xie X."/>
            <person name="Bevan P."/>
            <person name="Brocchini S.J."/>
            <person name="Latham C.J."/>
            <person name="Charlton P."/>
            <person name="Moore M."/>
            <person name="Lewis S.J."/>
            <person name="Thornton D.M."/>
            <person name="Stephenson F.A."/>
            <person name="Smart T.G."/>
        </authorList>
    </citation>
    <scope>BIOTECHNOLOGY</scope>
</reference>
<reference key="3">
    <citation type="journal article" date="2007" name="Chem. Commun. (Camb.)">
        <title>Characterisation of 3-methylorcinaldehyde synthase (MOS) in Acremonium strictum: first observation of a reductive release mechanism during polyketide biosynthesis.</title>
        <authorList>
            <person name="Bailey A.M."/>
            <person name="Cox R.J."/>
            <person name="Harley K."/>
            <person name="Lazarus C.M."/>
            <person name="Simpson T.J."/>
            <person name="Skellam E."/>
        </authorList>
    </citation>
    <scope>FUNCTION</scope>
</reference>
<reference key="4">
    <citation type="journal article" date="2010" name="Chem. Commun. (Camb.)">
        <title>Catalytic role of the C-terminal domains of a fungal non-reducing polyketide synthase.</title>
        <authorList>
            <person name="Fisch K.M."/>
            <person name="Skellam E."/>
            <person name="Ivison D."/>
            <person name="Cox R.J."/>
            <person name="Bailey A.M."/>
            <person name="Lazarus C.M."/>
            <person name="Simpson T.J."/>
        </authorList>
    </citation>
    <scope>FUNCTION</scope>
</reference>
<organism>
    <name type="scientific">Sarocladium schorii</name>
    <name type="common">Acremonium strictum (strain IMI 501407)</name>
    <dbReference type="NCBI Taxonomy" id="2203296"/>
    <lineage>
        <taxon>Eukaryota</taxon>
        <taxon>Fungi</taxon>
        <taxon>Dikarya</taxon>
        <taxon>Ascomycota</taxon>
        <taxon>Pezizomycotina</taxon>
        <taxon>Sordariomycetes</taxon>
        <taxon>Hypocreomycetidae</taxon>
        <taxon>Hypocreales</taxon>
        <taxon>Sarocladiaceae</taxon>
        <taxon>Sarocladium</taxon>
    </lineage>
</organism>
<gene>
    <name evidence="8" type="primary">asL5</name>
</gene>